<accession>Q6NCZ6</accession>
<name>RPAI_RHOPA</name>
<dbReference type="EC" id="2.3.1.229" evidence="2"/>
<dbReference type="EMBL" id="BX572593">
    <property type="protein sequence ID" value="CAE25764.1"/>
    <property type="molecule type" value="Genomic_DNA"/>
</dbReference>
<dbReference type="RefSeq" id="WP_011155888.1">
    <property type="nucleotide sequence ID" value="NZ_CP116810.1"/>
</dbReference>
<dbReference type="PDB" id="6WN0">
    <property type="method" value="X-ray"/>
    <property type="resolution" value="1.85 A"/>
    <property type="chains" value="A/B=1-213"/>
</dbReference>
<dbReference type="PDBsum" id="6WN0"/>
<dbReference type="SMR" id="Q6NCZ6"/>
<dbReference type="STRING" id="258594.RPA0320"/>
<dbReference type="DNASU" id="2691374"/>
<dbReference type="GeneID" id="66891330"/>
<dbReference type="eggNOG" id="COG3916">
    <property type="taxonomic scope" value="Bacteria"/>
</dbReference>
<dbReference type="HOGENOM" id="CLU_085711_3_0_5"/>
<dbReference type="PhylomeDB" id="Q6NCZ6"/>
<dbReference type="BRENDA" id="2.3.1.229">
    <property type="organism ID" value="5412"/>
</dbReference>
<dbReference type="GO" id="GO:0016740">
    <property type="term" value="F:transferase activity"/>
    <property type="evidence" value="ECO:0007669"/>
    <property type="project" value="UniProtKB-KW"/>
</dbReference>
<dbReference type="GO" id="GO:0009372">
    <property type="term" value="P:quorum sensing"/>
    <property type="evidence" value="ECO:0007669"/>
    <property type="project" value="UniProtKB-KW"/>
</dbReference>
<dbReference type="GO" id="GO:0007165">
    <property type="term" value="P:signal transduction"/>
    <property type="evidence" value="ECO:0007669"/>
    <property type="project" value="TreeGrafter"/>
</dbReference>
<dbReference type="Gene3D" id="3.40.630.30">
    <property type="match status" value="1"/>
</dbReference>
<dbReference type="InterPro" id="IPR016181">
    <property type="entry name" value="Acyl_CoA_acyltransferase"/>
</dbReference>
<dbReference type="InterPro" id="IPR001690">
    <property type="entry name" value="Autoind_synthase"/>
</dbReference>
<dbReference type="PANTHER" id="PTHR39322">
    <property type="entry name" value="ACYL-HOMOSERINE-LACTONE SYNTHASE"/>
    <property type="match status" value="1"/>
</dbReference>
<dbReference type="PANTHER" id="PTHR39322:SF1">
    <property type="entry name" value="ISOVALERYL-HOMOSERINE LACTONE SYNTHASE"/>
    <property type="match status" value="1"/>
</dbReference>
<dbReference type="Pfam" id="PF00765">
    <property type="entry name" value="Autoind_synth"/>
    <property type="match status" value="1"/>
</dbReference>
<dbReference type="PRINTS" id="PR01549">
    <property type="entry name" value="AUTOINDCRSYN"/>
</dbReference>
<dbReference type="SUPFAM" id="SSF55729">
    <property type="entry name" value="Acyl-CoA N-acyltransferases (Nat)"/>
    <property type="match status" value="1"/>
</dbReference>
<dbReference type="PROSITE" id="PS51187">
    <property type="entry name" value="AUTOINDUCER_SYNTH_2"/>
    <property type="match status" value="1"/>
</dbReference>
<reference key="1">
    <citation type="journal article" date="2004" name="Nat. Biotechnol.">
        <title>Complete genome sequence of the metabolically versatile photosynthetic bacterium Rhodopseudomonas palustris.</title>
        <authorList>
            <person name="Larimer F.W."/>
            <person name="Chain P."/>
            <person name="Hauser L."/>
            <person name="Lamerdin J.E."/>
            <person name="Malfatti S."/>
            <person name="Do L."/>
            <person name="Land M.L."/>
            <person name="Pelletier D.A."/>
            <person name="Beatty J.T."/>
            <person name="Lang A.S."/>
            <person name="Tabita F.R."/>
            <person name="Gibson J.L."/>
            <person name="Hanson T.E."/>
            <person name="Bobst C."/>
            <person name="Torres y Torres J.L."/>
            <person name="Peres C."/>
            <person name="Harrison F.H."/>
            <person name="Gibson J."/>
            <person name="Harwood C.S."/>
        </authorList>
    </citation>
    <scope>NUCLEOTIDE SEQUENCE [LARGE SCALE GENOMIC DNA]</scope>
    <source>
        <strain>ATCC BAA-98 / CGA009</strain>
    </source>
</reference>
<reference key="2">
    <citation type="journal article" date="2008" name="Nature">
        <title>A new class of homoserine lactone quorum-sensing signals.</title>
        <authorList>
            <person name="Schaefer A.L."/>
            <person name="Greenberg E.P."/>
            <person name="Oliver C.M."/>
            <person name="Oda Y."/>
            <person name="Huang J.J."/>
            <person name="Bittan-Banin G."/>
            <person name="Peres C.M."/>
            <person name="Schmidt S."/>
            <person name="Juhaszova K."/>
            <person name="Sufrin J.R."/>
            <person name="Harwood C.S."/>
        </authorList>
    </citation>
    <scope>FUNCTION</scope>
    <scope>CATALYTIC ACTIVITY</scope>
    <scope>INDUCTION</scope>
    <source>
        <strain>ATCC BAA-98 / CGA009</strain>
    </source>
</reference>
<protein>
    <recommendedName>
        <fullName evidence="4">4-coumaroyl-homoserine lactone synthase</fullName>
        <ecNumber evidence="2">2.3.1.229</ecNumber>
    </recommendedName>
    <alternativeName>
        <fullName evidence="3">p-coumaryl-homoserine lactone synthase</fullName>
        <shortName evidence="3">pC-HSL synthase</shortName>
    </alternativeName>
</protein>
<comment type="function">
    <text evidence="2">Catalyzes the synthesis of 4-coumaroyl-homoserine lactone, a quorum-sensing (QS) autoinducer molecule which binds to RpaR transcriptional regulator to regulate expression of QS-dependent genes.</text>
</comment>
<comment type="catalytic activity">
    <reaction evidence="2">
        <text>4-coumaroyl-CoA + S-adenosyl-L-methionine = N-(4-coumaroyl)-L-homoserine lactone + S-methyl-5'-thioadenosine + CoA + H(+)</text>
        <dbReference type="Rhea" id="RHEA:37491"/>
        <dbReference type="ChEBI" id="CHEBI:15378"/>
        <dbReference type="ChEBI" id="CHEBI:17509"/>
        <dbReference type="ChEBI" id="CHEBI:57287"/>
        <dbReference type="ChEBI" id="CHEBI:57355"/>
        <dbReference type="ChEBI" id="CHEBI:59789"/>
        <dbReference type="ChEBI" id="CHEBI:74974"/>
        <dbReference type="EC" id="2.3.1.229"/>
    </reaction>
</comment>
<comment type="induction">
    <text evidence="2">Repressed by RpaR in the absence of 4-coumaroyl-homoserine lactone. Induced by 4-coumaroyl-homoserine lactone.</text>
</comment>
<comment type="similarity">
    <text evidence="1">Belongs to the autoinducer synthase family.</text>
</comment>
<organism>
    <name type="scientific">Rhodopseudomonas palustris (strain ATCC BAA-98 / CGA009)</name>
    <dbReference type="NCBI Taxonomy" id="258594"/>
    <lineage>
        <taxon>Bacteria</taxon>
        <taxon>Pseudomonadati</taxon>
        <taxon>Pseudomonadota</taxon>
        <taxon>Alphaproteobacteria</taxon>
        <taxon>Hyphomicrobiales</taxon>
        <taxon>Nitrobacteraceae</taxon>
        <taxon>Rhodopseudomonas</taxon>
    </lineage>
</organism>
<proteinExistence type="evidence at protein level"/>
<sequence length="218" mass="24646">MQVHVIRRENRALYAGLLEKYFRIRHQIYVVERGWKELDRPDGREIDQFDTEDAVYLLGVDNDDIVAGMRMVPTTSPTLLSDVFPQLALAGPVRRPDAYELSRIFVVPRKRGEHGGPRAEAVIQAAAMEYGLSIGLSAFTIVLETWWLPRLVDQGWKAKPLGLPQDINGFSTTAVIVDVDDDAWVGICNRRSVPGPTLEWRGLEAIRRHSLPEFQVIS</sequence>
<feature type="chain" id="PRO_0000430601" description="4-coumaroyl-homoserine lactone synthase">
    <location>
        <begin position="1"/>
        <end position="218"/>
    </location>
</feature>
<feature type="strand" evidence="6">
    <location>
        <begin position="2"/>
        <end position="6"/>
    </location>
</feature>
<feature type="turn" evidence="6">
    <location>
        <begin position="8"/>
        <end position="10"/>
    </location>
</feature>
<feature type="helix" evidence="6">
    <location>
        <begin position="11"/>
        <end position="14"/>
    </location>
</feature>
<feature type="helix" evidence="6">
    <location>
        <begin position="15"/>
        <end position="29"/>
    </location>
</feature>
<feature type="turn" evidence="6">
    <location>
        <begin position="30"/>
        <end position="32"/>
    </location>
</feature>
<feature type="helix" evidence="6">
    <location>
        <begin position="36"/>
        <end position="38"/>
    </location>
</feature>
<feature type="strand" evidence="6">
    <location>
        <begin position="55"/>
        <end position="61"/>
    </location>
</feature>
<feature type="strand" evidence="6">
    <location>
        <begin position="64"/>
        <end position="73"/>
    </location>
</feature>
<feature type="helix" evidence="6">
    <location>
        <begin position="79"/>
        <end position="82"/>
    </location>
</feature>
<feature type="helix" evidence="6">
    <location>
        <begin position="85"/>
        <end position="87"/>
    </location>
</feature>
<feature type="strand" evidence="6">
    <location>
        <begin position="98"/>
        <end position="106"/>
    </location>
</feature>
<feature type="helix" evidence="6">
    <location>
        <begin position="108"/>
        <end position="110"/>
    </location>
</feature>
<feature type="strand" evidence="6">
    <location>
        <begin position="111"/>
        <end position="117"/>
    </location>
</feature>
<feature type="helix" evidence="6">
    <location>
        <begin position="119"/>
        <end position="134"/>
    </location>
</feature>
<feature type="strand" evidence="6">
    <location>
        <begin position="138"/>
        <end position="144"/>
    </location>
</feature>
<feature type="helix" evidence="6">
    <location>
        <begin position="147"/>
        <end position="153"/>
    </location>
</feature>
<feature type="strand" evidence="6">
    <location>
        <begin position="158"/>
        <end position="162"/>
    </location>
</feature>
<feature type="strand" evidence="6">
    <location>
        <begin position="165"/>
        <end position="167"/>
    </location>
</feature>
<feature type="strand" evidence="6">
    <location>
        <begin position="170"/>
        <end position="178"/>
    </location>
</feature>
<feature type="helix" evidence="6">
    <location>
        <begin position="181"/>
        <end position="191"/>
    </location>
</feature>
<evidence type="ECO:0000255" key="1">
    <source>
        <dbReference type="PROSITE-ProRule" id="PRU00533"/>
    </source>
</evidence>
<evidence type="ECO:0000269" key="2">
    <source>
    </source>
</evidence>
<evidence type="ECO:0000303" key="3">
    <source>
    </source>
</evidence>
<evidence type="ECO:0000305" key="4"/>
<evidence type="ECO:0000312" key="5">
    <source>
        <dbReference type="EMBL" id="CAE25764.1"/>
    </source>
</evidence>
<evidence type="ECO:0007829" key="6">
    <source>
        <dbReference type="PDB" id="6WN0"/>
    </source>
</evidence>
<gene>
    <name evidence="3" type="primary">rpaI</name>
    <name evidence="5" type="ordered locus">RPA0320</name>
</gene>
<keyword id="KW-0002">3D-structure</keyword>
<keyword id="KW-0071">Autoinducer synthesis</keyword>
<keyword id="KW-0673">Quorum sensing</keyword>
<keyword id="KW-0949">S-adenosyl-L-methionine</keyword>
<keyword id="KW-0808">Transferase</keyword>